<reference key="1">
    <citation type="submission" date="2007-03" db="EMBL/GenBank/DDBJ databases">
        <authorList>
            <consortium name="NIH - Mammalian Gene Collection (MGC) project"/>
        </authorList>
    </citation>
    <scope>NUCLEOTIDE SEQUENCE [LARGE SCALE MRNA]</scope>
    <source>
        <strain>Hereford</strain>
        <tissue>Hypothalamus</tissue>
    </source>
</reference>
<dbReference type="EMBL" id="BC134582">
    <property type="protein sequence ID" value="AAI34583.1"/>
    <property type="molecule type" value="mRNA"/>
</dbReference>
<dbReference type="RefSeq" id="NP_001077170.1">
    <property type="nucleotide sequence ID" value="NM_001083701.2"/>
</dbReference>
<dbReference type="SMR" id="A4IFH4"/>
<dbReference type="FunCoup" id="A4IFH4">
    <property type="interactions" value="1986"/>
</dbReference>
<dbReference type="STRING" id="9913.ENSBTAP00000026619"/>
<dbReference type="PaxDb" id="9913-ENSBTAP00000026619"/>
<dbReference type="GeneID" id="523427"/>
<dbReference type="KEGG" id="bta:523427"/>
<dbReference type="CTD" id="9837"/>
<dbReference type="VEuPathDB" id="HostDB:ENSBTAG00000019984"/>
<dbReference type="eggNOG" id="KOG3303">
    <property type="taxonomic scope" value="Eukaryota"/>
</dbReference>
<dbReference type="HOGENOM" id="CLU_079191_1_1_1"/>
<dbReference type="InParanoid" id="A4IFH4"/>
<dbReference type="OMA" id="MFCEKAT"/>
<dbReference type="OrthoDB" id="10252587at2759"/>
<dbReference type="TreeFam" id="TF312848"/>
<dbReference type="Reactome" id="R-BTA-176974">
    <property type="pathway name" value="Unwinding of DNA"/>
</dbReference>
<dbReference type="Proteomes" id="UP000009136">
    <property type="component" value="Chromosome 13"/>
</dbReference>
<dbReference type="Bgee" id="ENSBTAG00000019984">
    <property type="expression patterns" value="Expressed in oocyte and 109 other cell types or tissues"/>
</dbReference>
<dbReference type="GO" id="GO:0071162">
    <property type="term" value="C:CMG complex"/>
    <property type="evidence" value="ECO:0000250"/>
    <property type="project" value="UniProtKB"/>
</dbReference>
<dbReference type="GO" id="GO:0000811">
    <property type="term" value="C:GINS complex"/>
    <property type="evidence" value="ECO:0000318"/>
    <property type="project" value="GO_Central"/>
</dbReference>
<dbReference type="GO" id="GO:1902983">
    <property type="term" value="P:DNA strand elongation involved in mitotic DNA replication"/>
    <property type="evidence" value="ECO:0000318"/>
    <property type="project" value="GO_Central"/>
</dbReference>
<dbReference type="CDD" id="cd11710">
    <property type="entry name" value="GINS_A_psf1"/>
    <property type="match status" value="1"/>
</dbReference>
<dbReference type="CDD" id="cd21696">
    <property type="entry name" value="GINS_B_Psf1"/>
    <property type="match status" value="1"/>
</dbReference>
<dbReference type="FunFam" id="1.20.58.1030:FF:000001">
    <property type="entry name" value="DNA replication complex GINS protein PSF1"/>
    <property type="match status" value="1"/>
</dbReference>
<dbReference type="Gene3D" id="1.20.58.1030">
    <property type="match status" value="1"/>
</dbReference>
<dbReference type="InterPro" id="IPR021151">
    <property type="entry name" value="GINS_A"/>
</dbReference>
<dbReference type="InterPro" id="IPR036224">
    <property type="entry name" value="GINS_bundle-like_dom_sf"/>
</dbReference>
<dbReference type="InterPro" id="IPR005339">
    <property type="entry name" value="GINS_Psf1"/>
</dbReference>
<dbReference type="InterPro" id="IPR056783">
    <property type="entry name" value="PSF1_C"/>
</dbReference>
<dbReference type="PANTHER" id="PTHR12914:SF2">
    <property type="entry name" value="DNA REPLICATION COMPLEX GINS PROTEIN PSF1"/>
    <property type="match status" value="1"/>
</dbReference>
<dbReference type="PANTHER" id="PTHR12914">
    <property type="entry name" value="PARTNER OF SLD5"/>
    <property type="match status" value="1"/>
</dbReference>
<dbReference type="Pfam" id="PF24997">
    <property type="entry name" value="PSF1_C"/>
    <property type="match status" value="1"/>
</dbReference>
<dbReference type="Pfam" id="PF05916">
    <property type="entry name" value="Sld5"/>
    <property type="match status" value="1"/>
</dbReference>
<dbReference type="SUPFAM" id="SSF158573">
    <property type="entry name" value="GINS helical bundle-like"/>
    <property type="match status" value="1"/>
</dbReference>
<keyword id="KW-0158">Chromosome</keyword>
<keyword id="KW-0235">DNA replication</keyword>
<keyword id="KW-0539">Nucleus</keyword>
<keyword id="KW-1185">Reference proteome</keyword>
<evidence type="ECO:0000250" key="1">
    <source>
        <dbReference type="UniProtKB" id="Q14691"/>
    </source>
</evidence>
<evidence type="ECO:0000305" key="2"/>
<accession>A4IFH4</accession>
<gene>
    <name type="primary">GINS1</name>
    <name type="synonym">PSF1</name>
</gene>
<comment type="function">
    <text evidence="1">Required for correct functioning of the GINS complex, a complex that plays an essential role in the initiation of DNA replication, and progression of DNA replication forks. GINS complex is a core component of CDC45-MCM-GINS (CMG) helicase, the molecular machine that unwinds template DNA during replication, and around which the replisome is built.</text>
</comment>
<comment type="subunit">
    <text evidence="1">Component of the GINS complex which is a heterotetramer of GINS1, GINS2, GINS3 and GINS4. Forms a stable subcomplex with GINS4. GINS complex interacts with DNA primase in vitro. Component of the CMG helicase complex, a hexameric ring of related MCM2-7 subunits stabilized by CDC45 and the tetrameric GINS complex.</text>
</comment>
<comment type="subcellular location">
    <subcellularLocation>
        <location evidence="1">Nucleus</location>
    </subcellularLocation>
    <subcellularLocation>
        <location evidence="1">Chromosome</location>
    </subcellularLocation>
    <text evidence="1">Associates with chromatin.</text>
</comment>
<comment type="similarity">
    <text evidence="2">Belongs to the GINS1/PSF1 family.</text>
</comment>
<name>PSF1_BOVIN</name>
<feature type="chain" id="PRO_0000327217" description="DNA replication complex GINS protein PSF1">
    <location>
        <begin position="1"/>
        <end position="196"/>
    </location>
</feature>
<organism>
    <name type="scientific">Bos taurus</name>
    <name type="common">Bovine</name>
    <dbReference type="NCBI Taxonomy" id="9913"/>
    <lineage>
        <taxon>Eukaryota</taxon>
        <taxon>Metazoa</taxon>
        <taxon>Chordata</taxon>
        <taxon>Craniata</taxon>
        <taxon>Vertebrata</taxon>
        <taxon>Euteleostomi</taxon>
        <taxon>Mammalia</taxon>
        <taxon>Eutheria</taxon>
        <taxon>Laurasiatheria</taxon>
        <taxon>Artiodactyla</taxon>
        <taxon>Ruminantia</taxon>
        <taxon>Pecora</taxon>
        <taxon>Bovidae</taxon>
        <taxon>Bovinae</taxon>
        <taxon>Bos</taxon>
    </lineage>
</organism>
<proteinExistence type="evidence at transcript level"/>
<sequence length="196" mass="22951">MFCEKAMELVRELHRAAEGRLPAFNEDGLRQVLEEMKALYEQNQSDVNEAKSSGRGDLIPTIKFRHCSLLRNQRCTVAYLYDRLLRIRALRWEYGSVLPSALRFHMSAEEMDWFNRYKKSLATYMRSLGGDEGLDITQDMKPPKSLYIEVRCLKDYGEFEVEDGTSVLLKKNSQHFLPRWKCEQLIRQGILEHVLS</sequence>
<protein>
    <recommendedName>
        <fullName>DNA replication complex GINS protein PSF1</fullName>
    </recommendedName>
    <alternativeName>
        <fullName>GINS complex subunit 1</fullName>
    </alternativeName>
</protein>